<accession>Q0W933</accession>
<reference key="1">
    <citation type="journal article" date="2006" name="Science">
        <title>Genome of rice cluster I archaea -- the key methane producers in the rice rhizosphere.</title>
        <authorList>
            <person name="Erkel C."/>
            <person name="Kube M."/>
            <person name="Reinhardt R."/>
            <person name="Liesack W."/>
        </authorList>
    </citation>
    <scope>NUCLEOTIDE SEQUENCE [LARGE SCALE GENOMIC DNA]</scope>
    <source>
        <strain>DSM 22066 / NBRC 105507 / MRE50</strain>
    </source>
</reference>
<proteinExistence type="inferred from homology"/>
<keyword id="KW-0067">ATP-binding</keyword>
<keyword id="KW-0274">FAD</keyword>
<keyword id="KW-0285">Flavoprotein</keyword>
<keyword id="KW-0288">FMN</keyword>
<keyword id="KW-0547">Nucleotide-binding</keyword>
<keyword id="KW-0548">Nucleotidyltransferase</keyword>
<keyword id="KW-1185">Reference proteome</keyword>
<keyword id="KW-0808">Transferase</keyword>
<name>RIBL_METAR</name>
<gene>
    <name evidence="1" type="primary">ribL</name>
    <name type="ordered locus">UNCMA_30770</name>
    <name type="ORF">LRC62</name>
</gene>
<organism>
    <name type="scientific">Methanocella arvoryzae (strain DSM 22066 / NBRC 105507 / MRE50)</name>
    <dbReference type="NCBI Taxonomy" id="351160"/>
    <lineage>
        <taxon>Archaea</taxon>
        <taxon>Methanobacteriati</taxon>
        <taxon>Methanobacteriota</taxon>
        <taxon>Stenosarchaea group</taxon>
        <taxon>Methanomicrobia</taxon>
        <taxon>Methanocellales</taxon>
        <taxon>Methanocellaceae</taxon>
        <taxon>Methanocella</taxon>
    </lineage>
</organism>
<comment type="function">
    <text evidence="1">Catalyzes the transfer of the AMP portion of ATP to flavin mononucleotide (FMN) to produce flavin adenine dinucleotide (FAD) coenzyme.</text>
</comment>
<comment type="catalytic activity">
    <reaction evidence="1">
        <text>FMN + ATP + H(+) = FAD + diphosphate</text>
        <dbReference type="Rhea" id="RHEA:17237"/>
        <dbReference type="ChEBI" id="CHEBI:15378"/>
        <dbReference type="ChEBI" id="CHEBI:30616"/>
        <dbReference type="ChEBI" id="CHEBI:33019"/>
        <dbReference type="ChEBI" id="CHEBI:57692"/>
        <dbReference type="ChEBI" id="CHEBI:58210"/>
        <dbReference type="EC" id="2.7.7.2"/>
    </reaction>
</comment>
<comment type="cofactor">
    <cofactor evidence="1">
        <name>a divalent metal cation</name>
        <dbReference type="ChEBI" id="CHEBI:60240"/>
    </cofactor>
</comment>
<comment type="pathway">
    <text evidence="1">Cofactor biosynthesis; FAD biosynthesis; FAD from FMN: step 1/1.</text>
</comment>
<comment type="subunit">
    <text evidence="1">Homodimer.</text>
</comment>
<comment type="similarity">
    <text evidence="1">Belongs to the archaeal FAD synthase family.</text>
</comment>
<evidence type="ECO:0000255" key="1">
    <source>
        <dbReference type="HAMAP-Rule" id="MF_02115"/>
    </source>
</evidence>
<feature type="chain" id="PRO_0000406288" description="FAD synthase">
    <location>
        <begin position="1"/>
        <end position="140"/>
    </location>
</feature>
<feature type="binding site" evidence="1">
    <location>
        <begin position="10"/>
        <end position="11"/>
    </location>
    <ligand>
        <name>ATP</name>
        <dbReference type="ChEBI" id="CHEBI:30616"/>
    </ligand>
</feature>
<feature type="binding site" evidence="1">
    <location>
        <begin position="15"/>
        <end position="18"/>
    </location>
    <ligand>
        <name>ATP</name>
        <dbReference type="ChEBI" id="CHEBI:30616"/>
    </ligand>
</feature>
<feature type="binding site" evidence="1">
    <location>
        <position position="93"/>
    </location>
    <ligand>
        <name>ATP</name>
        <dbReference type="ChEBI" id="CHEBI:30616"/>
    </ligand>
</feature>
<sequence>MVRRVVATGTFDILHPGHVLYLCEARKHGDELWVIVARESTIKHKRKPLIPEEQRLFMVQSLKCVDHAVLGSETDMFEPIRQIQPEVIAIGFNQHWNENELKKQLAERGIKAEIVRIQTSDHSPYASSRTIRQKIKESDP</sequence>
<protein>
    <recommendedName>
        <fullName evidence="1">FAD synthase</fullName>
        <ecNumber evidence="1">2.7.7.2</ecNumber>
    </recommendedName>
    <alternativeName>
        <fullName evidence="1">FMN adenylyltransferase</fullName>
    </alternativeName>
    <alternativeName>
        <fullName evidence="1">Flavin adenine dinucleotide synthase</fullName>
    </alternativeName>
</protein>
<dbReference type="EC" id="2.7.7.2" evidence="1"/>
<dbReference type="EMBL" id="AM114193">
    <property type="protein sequence ID" value="CAJ35093.1"/>
    <property type="molecule type" value="Genomic_DNA"/>
</dbReference>
<dbReference type="RefSeq" id="WP_012037392.1">
    <property type="nucleotide sequence ID" value="NC_009464.1"/>
</dbReference>
<dbReference type="SMR" id="Q0W933"/>
<dbReference type="STRING" id="351160.LRC62"/>
<dbReference type="GeneID" id="5144381"/>
<dbReference type="KEGG" id="rci:LRC62"/>
<dbReference type="PATRIC" id="fig|351160.9.peg.3171"/>
<dbReference type="eggNOG" id="arCOG01222">
    <property type="taxonomic scope" value="Archaea"/>
</dbReference>
<dbReference type="OrthoDB" id="1912at2157"/>
<dbReference type="UniPathway" id="UPA00277">
    <property type="reaction ID" value="UER00407"/>
</dbReference>
<dbReference type="Proteomes" id="UP000000663">
    <property type="component" value="Chromosome"/>
</dbReference>
<dbReference type="GO" id="GO:0005524">
    <property type="term" value="F:ATP binding"/>
    <property type="evidence" value="ECO:0007669"/>
    <property type="project" value="UniProtKB-UniRule"/>
</dbReference>
<dbReference type="GO" id="GO:0003919">
    <property type="term" value="F:FMN adenylyltransferase activity"/>
    <property type="evidence" value="ECO:0007669"/>
    <property type="project" value="UniProtKB-UniRule"/>
</dbReference>
<dbReference type="GO" id="GO:0006747">
    <property type="term" value="P:FAD biosynthetic process"/>
    <property type="evidence" value="ECO:0007669"/>
    <property type="project" value="UniProtKB-UniRule"/>
</dbReference>
<dbReference type="GO" id="GO:0046444">
    <property type="term" value="P:FMN metabolic process"/>
    <property type="evidence" value="ECO:0007669"/>
    <property type="project" value="UniProtKB-UniRule"/>
</dbReference>
<dbReference type="Gene3D" id="3.40.50.620">
    <property type="entry name" value="HUPs"/>
    <property type="match status" value="1"/>
</dbReference>
<dbReference type="HAMAP" id="MF_02115">
    <property type="entry name" value="FAD_synth_arch"/>
    <property type="match status" value="1"/>
</dbReference>
<dbReference type="InterPro" id="IPR050385">
    <property type="entry name" value="Archaeal_FAD_synthase"/>
</dbReference>
<dbReference type="InterPro" id="IPR004821">
    <property type="entry name" value="Cyt_trans-like"/>
</dbReference>
<dbReference type="InterPro" id="IPR024902">
    <property type="entry name" value="FAD_synth_RibL"/>
</dbReference>
<dbReference type="InterPro" id="IPR014729">
    <property type="entry name" value="Rossmann-like_a/b/a_fold"/>
</dbReference>
<dbReference type="NCBIfam" id="TIGR00125">
    <property type="entry name" value="cyt_tran_rel"/>
    <property type="match status" value="1"/>
</dbReference>
<dbReference type="PANTHER" id="PTHR43793">
    <property type="entry name" value="FAD SYNTHASE"/>
    <property type="match status" value="1"/>
</dbReference>
<dbReference type="PANTHER" id="PTHR43793:SF1">
    <property type="entry name" value="FAD SYNTHASE"/>
    <property type="match status" value="1"/>
</dbReference>
<dbReference type="Pfam" id="PF01467">
    <property type="entry name" value="CTP_transf_like"/>
    <property type="match status" value="1"/>
</dbReference>
<dbReference type="SUPFAM" id="SSF52374">
    <property type="entry name" value="Nucleotidylyl transferase"/>
    <property type="match status" value="1"/>
</dbReference>